<feature type="chain" id="PRO_1000057665" description="Holo-[acyl-carrier-protein] synthase">
    <location>
        <begin position="1"/>
        <end position="122"/>
    </location>
</feature>
<feature type="binding site" evidence="1">
    <location>
        <position position="8"/>
    </location>
    <ligand>
        <name>Mg(2+)</name>
        <dbReference type="ChEBI" id="CHEBI:18420"/>
    </ligand>
</feature>
<feature type="binding site" evidence="1">
    <location>
        <position position="56"/>
    </location>
    <ligand>
        <name>Mg(2+)</name>
        <dbReference type="ChEBI" id="CHEBI:18420"/>
    </ligand>
</feature>
<keyword id="KW-0963">Cytoplasm</keyword>
<keyword id="KW-0275">Fatty acid biosynthesis</keyword>
<keyword id="KW-0276">Fatty acid metabolism</keyword>
<keyword id="KW-0444">Lipid biosynthesis</keyword>
<keyword id="KW-0443">Lipid metabolism</keyword>
<keyword id="KW-0460">Magnesium</keyword>
<keyword id="KW-0479">Metal-binding</keyword>
<keyword id="KW-1185">Reference proteome</keyword>
<keyword id="KW-0808">Transferase</keyword>
<comment type="function">
    <text evidence="1">Transfers the 4'-phosphopantetheine moiety from coenzyme A to a Ser of acyl-carrier-protein.</text>
</comment>
<comment type="catalytic activity">
    <reaction evidence="1">
        <text>apo-[ACP] + CoA = holo-[ACP] + adenosine 3',5'-bisphosphate + H(+)</text>
        <dbReference type="Rhea" id="RHEA:12068"/>
        <dbReference type="Rhea" id="RHEA-COMP:9685"/>
        <dbReference type="Rhea" id="RHEA-COMP:9690"/>
        <dbReference type="ChEBI" id="CHEBI:15378"/>
        <dbReference type="ChEBI" id="CHEBI:29999"/>
        <dbReference type="ChEBI" id="CHEBI:57287"/>
        <dbReference type="ChEBI" id="CHEBI:58343"/>
        <dbReference type="ChEBI" id="CHEBI:64479"/>
        <dbReference type="EC" id="2.7.8.7"/>
    </reaction>
</comment>
<comment type="cofactor">
    <cofactor evidence="1">
        <name>Mg(2+)</name>
        <dbReference type="ChEBI" id="CHEBI:18420"/>
    </cofactor>
</comment>
<comment type="subcellular location">
    <subcellularLocation>
        <location evidence="1">Cytoplasm</location>
    </subcellularLocation>
</comment>
<comment type="similarity">
    <text evidence="1">Belongs to the P-Pant transferase superfamily. AcpS family.</text>
</comment>
<organism>
    <name type="scientific">Alkaliphilus oremlandii (strain OhILAs)</name>
    <name type="common">Clostridium oremlandii (strain OhILAs)</name>
    <dbReference type="NCBI Taxonomy" id="350688"/>
    <lineage>
        <taxon>Bacteria</taxon>
        <taxon>Bacillati</taxon>
        <taxon>Bacillota</taxon>
        <taxon>Clostridia</taxon>
        <taxon>Peptostreptococcales</taxon>
        <taxon>Natronincolaceae</taxon>
        <taxon>Alkaliphilus</taxon>
    </lineage>
</organism>
<gene>
    <name evidence="1" type="primary">acpS</name>
    <name type="ordered locus">Clos_2276</name>
</gene>
<dbReference type="EC" id="2.7.8.7" evidence="1"/>
<dbReference type="EMBL" id="CP000853">
    <property type="protein sequence ID" value="ABW19809.1"/>
    <property type="molecule type" value="Genomic_DNA"/>
</dbReference>
<dbReference type="RefSeq" id="WP_012160116.1">
    <property type="nucleotide sequence ID" value="NC_009922.1"/>
</dbReference>
<dbReference type="SMR" id="A8MJ27"/>
<dbReference type="STRING" id="350688.Clos_2276"/>
<dbReference type="KEGG" id="aoe:Clos_2276"/>
<dbReference type="eggNOG" id="COG0736">
    <property type="taxonomic scope" value="Bacteria"/>
</dbReference>
<dbReference type="HOGENOM" id="CLU_089696_0_2_9"/>
<dbReference type="OrthoDB" id="517356at2"/>
<dbReference type="Proteomes" id="UP000000269">
    <property type="component" value="Chromosome"/>
</dbReference>
<dbReference type="GO" id="GO:0005737">
    <property type="term" value="C:cytoplasm"/>
    <property type="evidence" value="ECO:0007669"/>
    <property type="project" value="UniProtKB-SubCell"/>
</dbReference>
<dbReference type="GO" id="GO:0008897">
    <property type="term" value="F:holo-[acyl-carrier-protein] synthase activity"/>
    <property type="evidence" value="ECO:0007669"/>
    <property type="project" value="UniProtKB-UniRule"/>
</dbReference>
<dbReference type="GO" id="GO:0000287">
    <property type="term" value="F:magnesium ion binding"/>
    <property type="evidence" value="ECO:0007669"/>
    <property type="project" value="UniProtKB-UniRule"/>
</dbReference>
<dbReference type="GO" id="GO:0006633">
    <property type="term" value="P:fatty acid biosynthetic process"/>
    <property type="evidence" value="ECO:0007669"/>
    <property type="project" value="UniProtKB-UniRule"/>
</dbReference>
<dbReference type="Gene3D" id="3.90.470.20">
    <property type="entry name" value="4'-phosphopantetheinyl transferase domain"/>
    <property type="match status" value="1"/>
</dbReference>
<dbReference type="HAMAP" id="MF_00101">
    <property type="entry name" value="AcpS"/>
    <property type="match status" value="1"/>
</dbReference>
<dbReference type="InterPro" id="IPR008278">
    <property type="entry name" value="4-PPantetheinyl_Trfase_dom"/>
</dbReference>
<dbReference type="InterPro" id="IPR037143">
    <property type="entry name" value="4-PPantetheinyl_Trfase_dom_sf"/>
</dbReference>
<dbReference type="InterPro" id="IPR002582">
    <property type="entry name" value="ACPS"/>
</dbReference>
<dbReference type="InterPro" id="IPR004568">
    <property type="entry name" value="Ppantetheine-prot_Trfase_dom"/>
</dbReference>
<dbReference type="NCBIfam" id="TIGR00516">
    <property type="entry name" value="acpS"/>
    <property type="match status" value="1"/>
</dbReference>
<dbReference type="NCBIfam" id="TIGR00556">
    <property type="entry name" value="pantethn_trn"/>
    <property type="match status" value="1"/>
</dbReference>
<dbReference type="Pfam" id="PF01648">
    <property type="entry name" value="ACPS"/>
    <property type="match status" value="1"/>
</dbReference>
<dbReference type="SUPFAM" id="SSF56214">
    <property type="entry name" value="4'-phosphopantetheinyl transferase"/>
    <property type="match status" value="1"/>
</dbReference>
<protein>
    <recommendedName>
        <fullName evidence="1">Holo-[acyl-carrier-protein] synthase</fullName>
        <shortName evidence="1">Holo-ACP synthase</shortName>
        <ecNumber evidence="1">2.7.8.7</ecNumber>
    </recommendedName>
    <alternativeName>
        <fullName evidence="1">4'-phosphopantetheinyl transferase AcpS</fullName>
    </alternativeName>
</protein>
<evidence type="ECO:0000255" key="1">
    <source>
        <dbReference type="HAMAP-Rule" id="MF_00101"/>
    </source>
</evidence>
<reference key="1">
    <citation type="submission" date="2007-10" db="EMBL/GenBank/DDBJ databases">
        <title>Complete genome of Alkaliphilus oremlandii OhILAs.</title>
        <authorList>
            <person name="Copeland A."/>
            <person name="Lucas S."/>
            <person name="Lapidus A."/>
            <person name="Barry K."/>
            <person name="Detter J.C."/>
            <person name="Glavina del Rio T."/>
            <person name="Hammon N."/>
            <person name="Israni S."/>
            <person name="Dalin E."/>
            <person name="Tice H."/>
            <person name="Pitluck S."/>
            <person name="Chain P."/>
            <person name="Malfatti S."/>
            <person name="Shin M."/>
            <person name="Vergez L."/>
            <person name="Schmutz J."/>
            <person name="Larimer F."/>
            <person name="Land M."/>
            <person name="Hauser L."/>
            <person name="Kyrpides N."/>
            <person name="Mikhailova N."/>
            <person name="Stolz J.F."/>
            <person name="Dawson A."/>
            <person name="Fisher E."/>
            <person name="Crable B."/>
            <person name="Perera E."/>
            <person name="Lisak J."/>
            <person name="Ranganathan M."/>
            <person name="Basu P."/>
            <person name="Richardson P."/>
        </authorList>
    </citation>
    <scope>NUCLEOTIDE SEQUENCE [LARGE SCALE GENOMIC DNA]</scope>
    <source>
        <strain>OhILAs</strain>
    </source>
</reference>
<proteinExistence type="inferred from homology"/>
<sequence>MIKGIGIDIIEIDRIGQAISKNNGFMDRIFTLNEQRLFEEKNNIMETIAGHFAAKEATAKALGTGIRNMKWKDIEILKDSLGKPYVELHNNAKTLADSMHIEQILISISHNKSNAVAQAIAI</sequence>
<name>ACPS_ALKOO</name>
<accession>A8MJ27</accession>